<comment type="function">
    <text evidence="1">Transfers an acetyl group from acetyl-CoA to L-homoserine, forming acetyl-L-homoserine.</text>
</comment>
<comment type="catalytic activity">
    <reaction evidence="1">
        <text>L-homoserine + acetyl-CoA = O-acetyl-L-homoserine + CoA</text>
        <dbReference type="Rhea" id="RHEA:13701"/>
        <dbReference type="ChEBI" id="CHEBI:57287"/>
        <dbReference type="ChEBI" id="CHEBI:57288"/>
        <dbReference type="ChEBI" id="CHEBI:57476"/>
        <dbReference type="ChEBI" id="CHEBI:57716"/>
        <dbReference type="EC" id="2.3.1.31"/>
    </reaction>
</comment>
<comment type="pathway">
    <text evidence="1">Amino-acid biosynthesis; L-methionine biosynthesis via de novo pathway; O-acetyl-L-homoserine from L-homoserine: step 1/1.</text>
</comment>
<comment type="subcellular location">
    <subcellularLocation>
        <location evidence="1">Cytoplasm</location>
    </subcellularLocation>
</comment>
<comment type="similarity">
    <text evidence="1">Belongs to the MetA family.</text>
</comment>
<name>METAA_CLOBA</name>
<evidence type="ECO:0000255" key="1">
    <source>
        <dbReference type="HAMAP-Rule" id="MF_00295"/>
    </source>
</evidence>
<proteinExistence type="inferred from homology"/>
<reference key="1">
    <citation type="submission" date="2008-05" db="EMBL/GenBank/DDBJ databases">
        <title>Complete genome sequence of Clostridium botulinum E3 str. Alaska E43.</title>
        <authorList>
            <person name="Brinkac L.M."/>
            <person name="Brown J.L."/>
            <person name="Bruce D."/>
            <person name="Detter C."/>
            <person name="Munk C."/>
            <person name="Smith L.A."/>
            <person name="Smith T.J."/>
            <person name="Sutton G."/>
            <person name="Brettin T.S."/>
        </authorList>
    </citation>
    <scope>NUCLEOTIDE SEQUENCE [LARGE SCALE GENOMIC DNA]</scope>
    <source>
        <strain>Alaska E43 / Type E3</strain>
    </source>
</reference>
<feature type="chain" id="PRO_1000115176" description="Homoserine O-acetyltransferase">
    <location>
        <begin position="1"/>
        <end position="306"/>
    </location>
</feature>
<feature type="active site" description="Acyl-thioester intermediate" evidence="1">
    <location>
        <position position="142"/>
    </location>
</feature>
<feature type="active site" description="Proton acceptor" evidence="1">
    <location>
        <position position="235"/>
    </location>
</feature>
<feature type="active site" evidence="1">
    <location>
        <position position="237"/>
    </location>
</feature>
<feature type="binding site" evidence="1">
    <location>
        <position position="163"/>
    </location>
    <ligand>
        <name>substrate</name>
    </ligand>
</feature>
<feature type="binding site" evidence="1">
    <location>
        <position position="192"/>
    </location>
    <ligand>
        <name>substrate</name>
    </ligand>
</feature>
<feature type="binding site" evidence="1">
    <location>
        <position position="249"/>
    </location>
    <ligand>
        <name>substrate</name>
    </ligand>
</feature>
<feature type="site" description="Important for acyl-CoA specificity" evidence="1">
    <location>
        <position position="111"/>
    </location>
</feature>
<feature type="site" description="Important for substrate specificity" evidence="1">
    <location>
        <position position="192"/>
    </location>
</feature>
<dbReference type="EC" id="2.3.1.31" evidence="1"/>
<dbReference type="EMBL" id="CP001078">
    <property type="protein sequence ID" value="ACD51971.1"/>
    <property type="molecule type" value="Genomic_DNA"/>
</dbReference>
<dbReference type="SMR" id="B2UXD0"/>
<dbReference type="KEGG" id="cbt:CLH_2655"/>
<dbReference type="HOGENOM" id="CLU_057851_0_1_9"/>
<dbReference type="UniPathway" id="UPA00051">
    <property type="reaction ID" value="UER00074"/>
</dbReference>
<dbReference type="GO" id="GO:0005737">
    <property type="term" value="C:cytoplasm"/>
    <property type="evidence" value="ECO:0007669"/>
    <property type="project" value="UniProtKB-SubCell"/>
</dbReference>
<dbReference type="GO" id="GO:0004414">
    <property type="term" value="F:homoserine O-acetyltransferase activity"/>
    <property type="evidence" value="ECO:0007669"/>
    <property type="project" value="UniProtKB-EC"/>
</dbReference>
<dbReference type="GO" id="GO:0008899">
    <property type="term" value="F:homoserine O-succinyltransferase activity"/>
    <property type="evidence" value="ECO:0007669"/>
    <property type="project" value="UniProtKB-UniRule"/>
</dbReference>
<dbReference type="GO" id="GO:0019281">
    <property type="term" value="P:L-methionine biosynthetic process from homoserine via O-succinyl-L-homoserine and cystathionine"/>
    <property type="evidence" value="ECO:0007669"/>
    <property type="project" value="InterPro"/>
</dbReference>
<dbReference type="CDD" id="cd03131">
    <property type="entry name" value="GATase1_HTS"/>
    <property type="match status" value="1"/>
</dbReference>
<dbReference type="FunFam" id="3.40.50.880:FF:000004">
    <property type="entry name" value="Homoserine O-succinyltransferase"/>
    <property type="match status" value="1"/>
</dbReference>
<dbReference type="Gene3D" id="3.40.50.880">
    <property type="match status" value="1"/>
</dbReference>
<dbReference type="HAMAP" id="MF_00295">
    <property type="entry name" value="MetA_acyltransf"/>
    <property type="match status" value="1"/>
</dbReference>
<dbReference type="InterPro" id="IPR029062">
    <property type="entry name" value="Class_I_gatase-like"/>
</dbReference>
<dbReference type="InterPro" id="IPR005697">
    <property type="entry name" value="HST_MetA"/>
</dbReference>
<dbReference type="InterPro" id="IPR033752">
    <property type="entry name" value="MetA_family"/>
</dbReference>
<dbReference type="NCBIfam" id="TIGR01001">
    <property type="entry name" value="metA"/>
    <property type="match status" value="1"/>
</dbReference>
<dbReference type="PANTHER" id="PTHR20919">
    <property type="entry name" value="HOMOSERINE O-SUCCINYLTRANSFERASE"/>
    <property type="match status" value="1"/>
</dbReference>
<dbReference type="PANTHER" id="PTHR20919:SF0">
    <property type="entry name" value="HOMOSERINE O-SUCCINYLTRANSFERASE"/>
    <property type="match status" value="1"/>
</dbReference>
<dbReference type="Pfam" id="PF04204">
    <property type="entry name" value="HTS"/>
    <property type="match status" value="1"/>
</dbReference>
<dbReference type="PIRSF" id="PIRSF000450">
    <property type="entry name" value="H_ser_succinyltr"/>
    <property type="match status" value="1"/>
</dbReference>
<dbReference type="SUPFAM" id="SSF52317">
    <property type="entry name" value="Class I glutamine amidotransferase-like"/>
    <property type="match status" value="1"/>
</dbReference>
<protein>
    <recommendedName>
        <fullName evidence="1">Homoserine O-acetyltransferase</fullName>
        <shortName evidence="1">HAT</shortName>
        <ecNumber evidence="1">2.3.1.31</ecNumber>
    </recommendedName>
    <alternativeName>
        <fullName evidence="1">Homoserine transacetylase</fullName>
        <shortName evidence="1">HTA</shortName>
    </alternativeName>
</protein>
<organism>
    <name type="scientific">Clostridium botulinum (strain Alaska E43 / Type E3)</name>
    <dbReference type="NCBI Taxonomy" id="508767"/>
    <lineage>
        <taxon>Bacteria</taxon>
        <taxon>Bacillati</taxon>
        <taxon>Bacillota</taxon>
        <taxon>Clostridia</taxon>
        <taxon>Eubacteriales</taxon>
        <taxon>Clostridiaceae</taxon>
        <taxon>Clostridium</taxon>
    </lineage>
</organism>
<keyword id="KW-0012">Acyltransferase</keyword>
<keyword id="KW-0028">Amino-acid biosynthesis</keyword>
<keyword id="KW-0963">Cytoplasm</keyword>
<keyword id="KW-0486">Methionine biosynthesis</keyword>
<keyword id="KW-0808">Transferase</keyword>
<sequence>MPIKIPTELPAFKVLSNENIFVMNDSRAKTQDIRPLKIAILNLMPKKILAENQLLRHLSNTPLQVEVKLIQTKSYVSQNTPIEHLEKFYTYFDDIKEEKFDGLIITGAPVEQMEFEDITYWNELTEIMEWSKSNIFSTLHICWGAQAGLYYHYNIPKYKLENKISGVFSHWVNDENADLTRGLDDVFHVPHSRHTEVKKEDINKISELEILSESKEAGIFIVATKNRRKIFFMGHPEYDRNTLKEEYLRDREKGDDVEIPQNYFVDNDINSTPKFTWRGSSNIIFGNWLNYCVYQNTPYDINEISE</sequence>
<accession>B2UXD0</accession>
<gene>
    <name evidence="1" type="primary">metAA</name>
    <name type="ordered locus">CLH_2655</name>
</gene>